<proteinExistence type="inferred from homology"/>
<protein>
    <recommendedName>
        <fullName evidence="1">Small ribosomal subunit biogenesis GTPase RsgA</fullName>
        <ecNumber evidence="1">3.6.1.-</ecNumber>
    </recommendedName>
</protein>
<organism>
    <name type="scientific">Escherichia fergusonii (strain ATCC 35469 / DSM 13698 / CCUG 18766 / IAM 14443 / JCM 21226 / LMG 7866 / NBRC 102419 / NCTC 12128 / CDC 0568-73)</name>
    <dbReference type="NCBI Taxonomy" id="585054"/>
    <lineage>
        <taxon>Bacteria</taxon>
        <taxon>Pseudomonadati</taxon>
        <taxon>Pseudomonadota</taxon>
        <taxon>Gammaproteobacteria</taxon>
        <taxon>Enterobacterales</taxon>
        <taxon>Enterobacteriaceae</taxon>
        <taxon>Escherichia</taxon>
    </lineage>
</organism>
<dbReference type="EC" id="3.6.1.-" evidence="1"/>
<dbReference type="EMBL" id="CU928158">
    <property type="protein sequence ID" value="CAQ91635.1"/>
    <property type="molecule type" value="Genomic_DNA"/>
</dbReference>
<dbReference type="RefSeq" id="WP_000041956.1">
    <property type="nucleotide sequence ID" value="NC_011740.1"/>
</dbReference>
<dbReference type="SMR" id="B7LLU5"/>
<dbReference type="GeneID" id="75059200"/>
<dbReference type="KEGG" id="efe:EFER_4215"/>
<dbReference type="HOGENOM" id="CLU_033617_2_0_6"/>
<dbReference type="OrthoDB" id="9809485at2"/>
<dbReference type="Proteomes" id="UP000000745">
    <property type="component" value="Chromosome"/>
</dbReference>
<dbReference type="GO" id="GO:0005737">
    <property type="term" value="C:cytoplasm"/>
    <property type="evidence" value="ECO:0007669"/>
    <property type="project" value="UniProtKB-SubCell"/>
</dbReference>
<dbReference type="GO" id="GO:0005525">
    <property type="term" value="F:GTP binding"/>
    <property type="evidence" value="ECO:0007669"/>
    <property type="project" value="UniProtKB-UniRule"/>
</dbReference>
<dbReference type="GO" id="GO:0003924">
    <property type="term" value="F:GTPase activity"/>
    <property type="evidence" value="ECO:0007669"/>
    <property type="project" value="UniProtKB-UniRule"/>
</dbReference>
<dbReference type="GO" id="GO:0046872">
    <property type="term" value="F:metal ion binding"/>
    <property type="evidence" value="ECO:0007669"/>
    <property type="project" value="UniProtKB-KW"/>
</dbReference>
<dbReference type="GO" id="GO:0019843">
    <property type="term" value="F:rRNA binding"/>
    <property type="evidence" value="ECO:0007669"/>
    <property type="project" value="UniProtKB-KW"/>
</dbReference>
<dbReference type="GO" id="GO:0042274">
    <property type="term" value="P:ribosomal small subunit biogenesis"/>
    <property type="evidence" value="ECO:0007669"/>
    <property type="project" value="UniProtKB-UniRule"/>
</dbReference>
<dbReference type="CDD" id="cd01854">
    <property type="entry name" value="YjeQ_EngC"/>
    <property type="match status" value="1"/>
</dbReference>
<dbReference type="FunFam" id="1.10.40.50:FF:000001">
    <property type="entry name" value="Small ribosomal subunit biogenesis GTPase RsgA"/>
    <property type="match status" value="1"/>
</dbReference>
<dbReference type="FunFam" id="2.40.50.140:FF:000122">
    <property type="entry name" value="Small ribosomal subunit biogenesis GTPase RsgA"/>
    <property type="match status" value="1"/>
</dbReference>
<dbReference type="FunFam" id="3.40.50.300:FF:000389">
    <property type="entry name" value="Small ribosomal subunit biogenesis GTPase RsgA"/>
    <property type="match status" value="1"/>
</dbReference>
<dbReference type="Gene3D" id="2.40.50.140">
    <property type="entry name" value="Nucleic acid-binding proteins"/>
    <property type="match status" value="1"/>
</dbReference>
<dbReference type="Gene3D" id="3.40.50.300">
    <property type="entry name" value="P-loop containing nucleotide triphosphate hydrolases"/>
    <property type="match status" value="1"/>
</dbReference>
<dbReference type="Gene3D" id="1.10.40.50">
    <property type="entry name" value="Probable gtpase engc, domain 3"/>
    <property type="match status" value="1"/>
</dbReference>
<dbReference type="HAMAP" id="MF_01820">
    <property type="entry name" value="GTPase_RsgA"/>
    <property type="match status" value="1"/>
</dbReference>
<dbReference type="InterPro" id="IPR030378">
    <property type="entry name" value="G_CP_dom"/>
</dbReference>
<dbReference type="InterPro" id="IPR012340">
    <property type="entry name" value="NA-bd_OB-fold"/>
</dbReference>
<dbReference type="InterPro" id="IPR027417">
    <property type="entry name" value="P-loop_NTPase"/>
</dbReference>
<dbReference type="InterPro" id="IPR004881">
    <property type="entry name" value="Ribosome_biogen_GTPase_RsgA"/>
</dbReference>
<dbReference type="InterPro" id="IPR010914">
    <property type="entry name" value="RsgA_GTPase_dom"/>
</dbReference>
<dbReference type="NCBIfam" id="NF008931">
    <property type="entry name" value="PRK12288.1"/>
    <property type="match status" value="1"/>
</dbReference>
<dbReference type="NCBIfam" id="TIGR00157">
    <property type="entry name" value="ribosome small subunit-dependent GTPase A"/>
    <property type="match status" value="1"/>
</dbReference>
<dbReference type="PANTHER" id="PTHR32120">
    <property type="entry name" value="SMALL RIBOSOMAL SUBUNIT BIOGENESIS GTPASE RSGA"/>
    <property type="match status" value="1"/>
</dbReference>
<dbReference type="PANTHER" id="PTHR32120:SF11">
    <property type="entry name" value="SMALL RIBOSOMAL SUBUNIT BIOGENESIS GTPASE RSGA 1, MITOCHONDRIAL-RELATED"/>
    <property type="match status" value="1"/>
</dbReference>
<dbReference type="Pfam" id="PF03193">
    <property type="entry name" value="RsgA_GTPase"/>
    <property type="match status" value="1"/>
</dbReference>
<dbReference type="SUPFAM" id="SSF52540">
    <property type="entry name" value="P-loop containing nucleoside triphosphate hydrolases"/>
    <property type="match status" value="1"/>
</dbReference>
<dbReference type="PROSITE" id="PS50936">
    <property type="entry name" value="ENGC_GTPASE"/>
    <property type="match status" value="1"/>
</dbReference>
<dbReference type="PROSITE" id="PS51721">
    <property type="entry name" value="G_CP"/>
    <property type="match status" value="1"/>
</dbReference>
<feature type="chain" id="PRO_1000188076" description="Small ribosomal subunit biogenesis GTPase RsgA">
    <location>
        <begin position="1"/>
        <end position="350"/>
    </location>
</feature>
<feature type="domain" description="CP-type G" evidence="2">
    <location>
        <begin position="104"/>
        <end position="273"/>
    </location>
</feature>
<feature type="region of interest" description="Disordered" evidence="3">
    <location>
        <begin position="1"/>
        <end position="33"/>
    </location>
</feature>
<feature type="compositionally biased region" description="Polar residues" evidence="3">
    <location>
        <begin position="1"/>
        <end position="17"/>
    </location>
</feature>
<feature type="binding site" evidence="1">
    <location>
        <begin position="160"/>
        <end position="163"/>
    </location>
    <ligand>
        <name>GTP</name>
        <dbReference type="ChEBI" id="CHEBI:37565"/>
    </ligand>
</feature>
<feature type="binding site" evidence="1">
    <location>
        <begin position="214"/>
        <end position="222"/>
    </location>
    <ligand>
        <name>GTP</name>
        <dbReference type="ChEBI" id="CHEBI:37565"/>
    </ligand>
</feature>
<feature type="binding site" evidence="1">
    <location>
        <position position="297"/>
    </location>
    <ligand>
        <name>Zn(2+)</name>
        <dbReference type="ChEBI" id="CHEBI:29105"/>
    </ligand>
</feature>
<feature type="binding site" evidence="1">
    <location>
        <position position="302"/>
    </location>
    <ligand>
        <name>Zn(2+)</name>
        <dbReference type="ChEBI" id="CHEBI:29105"/>
    </ligand>
</feature>
<feature type="binding site" evidence="1">
    <location>
        <position position="304"/>
    </location>
    <ligand>
        <name>Zn(2+)</name>
        <dbReference type="ChEBI" id="CHEBI:29105"/>
    </ligand>
</feature>
<feature type="binding site" evidence="1">
    <location>
        <position position="310"/>
    </location>
    <ligand>
        <name>Zn(2+)</name>
        <dbReference type="ChEBI" id="CHEBI:29105"/>
    </ligand>
</feature>
<keyword id="KW-0963">Cytoplasm</keyword>
<keyword id="KW-0342">GTP-binding</keyword>
<keyword id="KW-0378">Hydrolase</keyword>
<keyword id="KW-0479">Metal-binding</keyword>
<keyword id="KW-0547">Nucleotide-binding</keyword>
<keyword id="KW-0690">Ribosome biogenesis</keyword>
<keyword id="KW-0694">RNA-binding</keyword>
<keyword id="KW-0699">rRNA-binding</keyword>
<keyword id="KW-0862">Zinc</keyword>
<comment type="function">
    <text evidence="1">One of several proteins that assist in the late maturation steps of the functional core of the 30S ribosomal subunit. Helps release RbfA from mature subunits. May play a role in the assembly of ribosomal proteins into the subunit. Circularly permuted GTPase that catalyzes slow GTP hydrolysis, GTPase activity is stimulated by the 30S ribosomal subunit.</text>
</comment>
<comment type="cofactor">
    <cofactor evidence="1">
        <name>Zn(2+)</name>
        <dbReference type="ChEBI" id="CHEBI:29105"/>
    </cofactor>
    <text evidence="1">Binds 1 zinc ion per subunit.</text>
</comment>
<comment type="subunit">
    <text evidence="1">Monomer. Associates with 30S ribosomal subunit, binds 16S rRNA.</text>
</comment>
<comment type="subcellular location">
    <subcellularLocation>
        <location evidence="1">Cytoplasm</location>
    </subcellularLocation>
</comment>
<comment type="similarity">
    <text evidence="1">Belongs to the TRAFAC class YlqF/YawG GTPase family. RsgA subfamily.</text>
</comment>
<accession>B7LLU5</accession>
<gene>
    <name evidence="1" type="primary">rsgA</name>
    <name type="ordered locus">EFER_4215</name>
</gene>
<evidence type="ECO:0000255" key="1">
    <source>
        <dbReference type="HAMAP-Rule" id="MF_01820"/>
    </source>
</evidence>
<evidence type="ECO:0000255" key="2">
    <source>
        <dbReference type="PROSITE-ProRule" id="PRU01058"/>
    </source>
</evidence>
<evidence type="ECO:0000256" key="3">
    <source>
        <dbReference type="SAM" id="MobiDB-lite"/>
    </source>
</evidence>
<name>RSGA_ESCF3</name>
<sequence>MSKNKLSKGQQRRVNANHQRRLKTSKEKPDYDDNLFGEPDEGIVISRFGMHADVESADGDVHRCNIRRTIRSLVTGDRVVWRPGKLAAEGVNVKGIVEAVHERTSVLTRPDFYDGVKPIAANIDQIVIVSAILPELSLNIIDRYLVACETLQIEPIIVLNKIDLLDDEGMAFVNEQMDIYRNIGYRVLMVSSHTQDGLKPLEEALTGRISIFAGQSGVGKSSLLNALLGLQKEILTNDVSDNSGLGQHTTTAARLYHFPHGGDVIDSPGVREFGLWHLEPEQITQGFVEFHDYLGLCKYRDCKHDTDPGCAIREAVDEGKIAETRFENYHRILESMAQVKTRKNFSDTDD</sequence>
<reference key="1">
    <citation type="journal article" date="2009" name="PLoS Genet.">
        <title>Organised genome dynamics in the Escherichia coli species results in highly diverse adaptive paths.</title>
        <authorList>
            <person name="Touchon M."/>
            <person name="Hoede C."/>
            <person name="Tenaillon O."/>
            <person name="Barbe V."/>
            <person name="Baeriswyl S."/>
            <person name="Bidet P."/>
            <person name="Bingen E."/>
            <person name="Bonacorsi S."/>
            <person name="Bouchier C."/>
            <person name="Bouvet O."/>
            <person name="Calteau A."/>
            <person name="Chiapello H."/>
            <person name="Clermont O."/>
            <person name="Cruveiller S."/>
            <person name="Danchin A."/>
            <person name="Diard M."/>
            <person name="Dossat C."/>
            <person name="Karoui M.E."/>
            <person name="Frapy E."/>
            <person name="Garry L."/>
            <person name="Ghigo J.M."/>
            <person name="Gilles A.M."/>
            <person name="Johnson J."/>
            <person name="Le Bouguenec C."/>
            <person name="Lescat M."/>
            <person name="Mangenot S."/>
            <person name="Martinez-Jehanne V."/>
            <person name="Matic I."/>
            <person name="Nassif X."/>
            <person name="Oztas S."/>
            <person name="Petit M.A."/>
            <person name="Pichon C."/>
            <person name="Rouy Z."/>
            <person name="Ruf C.S."/>
            <person name="Schneider D."/>
            <person name="Tourret J."/>
            <person name="Vacherie B."/>
            <person name="Vallenet D."/>
            <person name="Medigue C."/>
            <person name="Rocha E.P.C."/>
            <person name="Denamur E."/>
        </authorList>
    </citation>
    <scope>NUCLEOTIDE SEQUENCE [LARGE SCALE GENOMIC DNA]</scope>
    <source>
        <strain>ATCC 35469 / DSM 13698 / BCRC 15582 / CCUG 18766 / IAM 14443 / JCM 21226 / LMG 7866 / NBRC 102419 / NCTC 12128 / CDC 0568-73</strain>
    </source>
</reference>